<protein>
    <recommendedName>
        <fullName evidence="1">Putative uncharacterized protein CCDC28A-AS1</fullName>
    </recommendedName>
    <alternativeName>
        <fullName evidence="2">GVQW motif-containing protein 2</fullName>
    </alternativeName>
</protein>
<reference key="1">
    <citation type="journal article" date="2004" name="Nat. Genet.">
        <title>Complete sequencing and characterization of 21,243 full-length human cDNAs.</title>
        <authorList>
            <person name="Ota T."/>
            <person name="Suzuki Y."/>
            <person name="Nishikawa T."/>
            <person name="Otsuki T."/>
            <person name="Sugiyama T."/>
            <person name="Irie R."/>
            <person name="Wakamatsu A."/>
            <person name="Hayashi K."/>
            <person name="Sato H."/>
            <person name="Nagai K."/>
            <person name="Kimura K."/>
            <person name="Makita H."/>
            <person name="Sekine M."/>
            <person name="Obayashi M."/>
            <person name="Nishi T."/>
            <person name="Shibahara T."/>
            <person name="Tanaka T."/>
            <person name="Ishii S."/>
            <person name="Yamamoto J."/>
            <person name="Saito K."/>
            <person name="Kawai Y."/>
            <person name="Isono Y."/>
            <person name="Nakamura Y."/>
            <person name="Nagahari K."/>
            <person name="Murakami K."/>
            <person name="Yasuda T."/>
            <person name="Iwayanagi T."/>
            <person name="Wagatsuma M."/>
            <person name="Shiratori A."/>
            <person name="Sudo H."/>
            <person name="Hosoiri T."/>
            <person name="Kaku Y."/>
            <person name="Kodaira H."/>
            <person name="Kondo H."/>
            <person name="Sugawara M."/>
            <person name="Takahashi M."/>
            <person name="Kanda K."/>
            <person name="Yokoi T."/>
            <person name="Furuya T."/>
            <person name="Kikkawa E."/>
            <person name="Omura Y."/>
            <person name="Abe K."/>
            <person name="Kamihara K."/>
            <person name="Katsuta N."/>
            <person name="Sato K."/>
            <person name="Tanikawa M."/>
            <person name="Yamazaki M."/>
            <person name="Ninomiya K."/>
            <person name="Ishibashi T."/>
            <person name="Yamashita H."/>
            <person name="Murakawa K."/>
            <person name="Fujimori K."/>
            <person name="Tanai H."/>
            <person name="Kimata M."/>
            <person name="Watanabe M."/>
            <person name="Hiraoka S."/>
            <person name="Chiba Y."/>
            <person name="Ishida S."/>
            <person name="Ono Y."/>
            <person name="Takiguchi S."/>
            <person name="Watanabe S."/>
            <person name="Yosida M."/>
            <person name="Hotuta T."/>
            <person name="Kusano J."/>
            <person name="Kanehori K."/>
            <person name="Takahashi-Fujii A."/>
            <person name="Hara H."/>
            <person name="Tanase T.-O."/>
            <person name="Nomura Y."/>
            <person name="Togiya S."/>
            <person name="Komai F."/>
            <person name="Hara R."/>
            <person name="Takeuchi K."/>
            <person name="Arita M."/>
            <person name="Imose N."/>
            <person name="Musashino K."/>
            <person name="Yuuki H."/>
            <person name="Oshima A."/>
            <person name="Sasaki N."/>
            <person name="Aotsuka S."/>
            <person name="Yoshikawa Y."/>
            <person name="Matsunawa H."/>
            <person name="Ichihara T."/>
            <person name="Shiohata N."/>
            <person name="Sano S."/>
            <person name="Moriya S."/>
            <person name="Momiyama H."/>
            <person name="Satoh N."/>
            <person name="Takami S."/>
            <person name="Terashima Y."/>
            <person name="Suzuki O."/>
            <person name="Nakagawa S."/>
            <person name="Senoh A."/>
            <person name="Mizoguchi H."/>
            <person name="Goto Y."/>
            <person name="Shimizu F."/>
            <person name="Wakebe H."/>
            <person name="Hishigaki H."/>
            <person name="Watanabe T."/>
            <person name="Sugiyama A."/>
            <person name="Takemoto M."/>
            <person name="Kawakami B."/>
            <person name="Yamazaki M."/>
            <person name="Watanabe K."/>
            <person name="Kumagai A."/>
            <person name="Itakura S."/>
            <person name="Fukuzumi Y."/>
            <person name="Fujimori Y."/>
            <person name="Komiyama M."/>
            <person name="Tashiro H."/>
            <person name="Tanigami A."/>
            <person name="Fujiwara T."/>
            <person name="Ono T."/>
            <person name="Yamada K."/>
            <person name="Fujii Y."/>
            <person name="Ozaki K."/>
            <person name="Hirao M."/>
            <person name="Ohmori Y."/>
            <person name="Kawabata A."/>
            <person name="Hikiji T."/>
            <person name="Kobatake N."/>
            <person name="Inagaki H."/>
            <person name="Ikema Y."/>
            <person name="Okamoto S."/>
            <person name="Okitani R."/>
            <person name="Kawakami T."/>
            <person name="Noguchi S."/>
            <person name="Itoh T."/>
            <person name="Shigeta K."/>
            <person name="Senba T."/>
            <person name="Matsumura K."/>
            <person name="Nakajima Y."/>
            <person name="Mizuno T."/>
            <person name="Morinaga M."/>
            <person name="Sasaki M."/>
            <person name="Togashi T."/>
            <person name="Oyama M."/>
            <person name="Hata H."/>
            <person name="Watanabe M."/>
            <person name="Komatsu T."/>
            <person name="Mizushima-Sugano J."/>
            <person name="Satoh T."/>
            <person name="Shirai Y."/>
            <person name="Takahashi Y."/>
            <person name="Nakagawa K."/>
            <person name="Okumura K."/>
            <person name="Nagase T."/>
            <person name="Nomura N."/>
            <person name="Kikuchi H."/>
            <person name="Masuho Y."/>
            <person name="Yamashita R."/>
            <person name="Nakai K."/>
            <person name="Yada T."/>
            <person name="Nakamura Y."/>
            <person name="Ohara O."/>
            <person name="Isogai T."/>
            <person name="Sugano S."/>
        </authorList>
    </citation>
    <scope>NUCLEOTIDE SEQUENCE [LARGE SCALE MRNA]</scope>
    <source>
        <tissue>Prostate</tissue>
    </source>
</reference>
<reference key="2">
    <citation type="journal article" date="2003" name="Nature">
        <title>The DNA sequence and analysis of human chromosome 6.</title>
        <authorList>
            <person name="Mungall A.J."/>
            <person name="Palmer S.A."/>
            <person name="Sims S.K."/>
            <person name="Edwards C.A."/>
            <person name="Ashurst J.L."/>
            <person name="Wilming L."/>
            <person name="Jones M.C."/>
            <person name="Horton R."/>
            <person name="Hunt S.E."/>
            <person name="Scott C.E."/>
            <person name="Gilbert J.G.R."/>
            <person name="Clamp M.E."/>
            <person name="Bethel G."/>
            <person name="Milne S."/>
            <person name="Ainscough R."/>
            <person name="Almeida J.P."/>
            <person name="Ambrose K.D."/>
            <person name="Andrews T.D."/>
            <person name="Ashwell R.I.S."/>
            <person name="Babbage A.K."/>
            <person name="Bagguley C.L."/>
            <person name="Bailey J."/>
            <person name="Banerjee R."/>
            <person name="Barker D.J."/>
            <person name="Barlow K.F."/>
            <person name="Bates K."/>
            <person name="Beare D.M."/>
            <person name="Beasley H."/>
            <person name="Beasley O."/>
            <person name="Bird C.P."/>
            <person name="Blakey S.E."/>
            <person name="Bray-Allen S."/>
            <person name="Brook J."/>
            <person name="Brown A.J."/>
            <person name="Brown J.Y."/>
            <person name="Burford D.C."/>
            <person name="Burrill W."/>
            <person name="Burton J."/>
            <person name="Carder C."/>
            <person name="Carter N.P."/>
            <person name="Chapman J.C."/>
            <person name="Clark S.Y."/>
            <person name="Clark G."/>
            <person name="Clee C.M."/>
            <person name="Clegg S."/>
            <person name="Cobley V."/>
            <person name="Collier R.E."/>
            <person name="Collins J.E."/>
            <person name="Colman L.K."/>
            <person name="Corby N.R."/>
            <person name="Coville G.J."/>
            <person name="Culley K.M."/>
            <person name="Dhami P."/>
            <person name="Davies J."/>
            <person name="Dunn M."/>
            <person name="Earthrowl M.E."/>
            <person name="Ellington A.E."/>
            <person name="Evans K.A."/>
            <person name="Faulkner L."/>
            <person name="Francis M.D."/>
            <person name="Frankish A."/>
            <person name="Frankland J."/>
            <person name="French L."/>
            <person name="Garner P."/>
            <person name="Garnett J."/>
            <person name="Ghori M.J."/>
            <person name="Gilby L.M."/>
            <person name="Gillson C.J."/>
            <person name="Glithero R.J."/>
            <person name="Grafham D.V."/>
            <person name="Grant M."/>
            <person name="Gribble S."/>
            <person name="Griffiths C."/>
            <person name="Griffiths M.N.D."/>
            <person name="Hall R."/>
            <person name="Halls K.S."/>
            <person name="Hammond S."/>
            <person name="Harley J.L."/>
            <person name="Hart E.A."/>
            <person name="Heath P.D."/>
            <person name="Heathcott R."/>
            <person name="Holmes S.J."/>
            <person name="Howden P.J."/>
            <person name="Howe K.L."/>
            <person name="Howell G.R."/>
            <person name="Huckle E."/>
            <person name="Humphray S.J."/>
            <person name="Humphries M.D."/>
            <person name="Hunt A.R."/>
            <person name="Johnson C.M."/>
            <person name="Joy A.A."/>
            <person name="Kay M."/>
            <person name="Keenan S.J."/>
            <person name="Kimberley A.M."/>
            <person name="King A."/>
            <person name="Laird G.K."/>
            <person name="Langford C."/>
            <person name="Lawlor S."/>
            <person name="Leongamornlert D.A."/>
            <person name="Leversha M."/>
            <person name="Lloyd C.R."/>
            <person name="Lloyd D.M."/>
            <person name="Loveland J.E."/>
            <person name="Lovell J."/>
            <person name="Martin S."/>
            <person name="Mashreghi-Mohammadi M."/>
            <person name="Maslen G.L."/>
            <person name="Matthews L."/>
            <person name="McCann O.T."/>
            <person name="McLaren S.J."/>
            <person name="McLay K."/>
            <person name="McMurray A."/>
            <person name="Moore M.J.F."/>
            <person name="Mullikin J.C."/>
            <person name="Niblett D."/>
            <person name="Nickerson T."/>
            <person name="Novik K.L."/>
            <person name="Oliver K."/>
            <person name="Overton-Larty E.K."/>
            <person name="Parker A."/>
            <person name="Patel R."/>
            <person name="Pearce A.V."/>
            <person name="Peck A.I."/>
            <person name="Phillimore B.J.C.T."/>
            <person name="Phillips S."/>
            <person name="Plumb R.W."/>
            <person name="Porter K.M."/>
            <person name="Ramsey Y."/>
            <person name="Ranby S.A."/>
            <person name="Rice C.M."/>
            <person name="Ross M.T."/>
            <person name="Searle S.M."/>
            <person name="Sehra H.K."/>
            <person name="Sheridan E."/>
            <person name="Skuce C.D."/>
            <person name="Smith S."/>
            <person name="Smith M."/>
            <person name="Spraggon L."/>
            <person name="Squares S.L."/>
            <person name="Steward C.A."/>
            <person name="Sycamore N."/>
            <person name="Tamlyn-Hall G."/>
            <person name="Tester J."/>
            <person name="Theaker A.J."/>
            <person name="Thomas D.W."/>
            <person name="Thorpe A."/>
            <person name="Tracey A."/>
            <person name="Tromans A."/>
            <person name="Tubby B."/>
            <person name="Wall M."/>
            <person name="Wallis J.M."/>
            <person name="West A.P."/>
            <person name="White S.S."/>
            <person name="Whitehead S.L."/>
            <person name="Whittaker H."/>
            <person name="Wild A."/>
            <person name="Willey D.J."/>
            <person name="Wilmer T.E."/>
            <person name="Wood J.M."/>
            <person name="Wray P.W."/>
            <person name="Wyatt J.C."/>
            <person name="Young L."/>
            <person name="Younger R.M."/>
            <person name="Bentley D.R."/>
            <person name="Coulson A."/>
            <person name="Durbin R.M."/>
            <person name="Hubbard T."/>
            <person name="Sulston J.E."/>
            <person name="Dunham I."/>
            <person name="Rogers J."/>
            <person name="Beck S."/>
        </authorList>
    </citation>
    <scope>NUCLEOTIDE SEQUENCE [LARGE SCALE GENOMIC DNA]</scope>
</reference>
<sequence length="108" mass="11989">MQYPFRKLLRPSTESCCVAQARVQWCHLGSLQPPLPGFKQFSCHSLPSSWDYRWNLTLSPRLECSGAISAHCNLCLPDLSDSPASTSRVAGTTGAHHHAQEPVVIRKM</sequence>
<name>GVQW2_HUMAN</name>
<dbReference type="EMBL" id="AK092592">
    <property type="status" value="NOT_ANNOTATED_CDS"/>
    <property type="molecule type" value="mRNA"/>
</dbReference>
<dbReference type="EMBL" id="AL121834">
    <property type="status" value="NOT_ANNOTATED_CDS"/>
    <property type="molecule type" value="Genomic_DNA"/>
</dbReference>
<dbReference type="EMBL" id="AL590617">
    <property type="status" value="NOT_ANNOTATED_CDS"/>
    <property type="molecule type" value="Genomic_DNA"/>
</dbReference>
<dbReference type="RefSeq" id="NP_001229669.1">
    <property type="nucleotide sequence ID" value="NM_001242740.1"/>
</dbReference>
<dbReference type="STRING" id="9606.ENSP00000493046"/>
<dbReference type="BioMuta" id="GVQW2"/>
<dbReference type="PaxDb" id="9606-ENSP00000485629"/>
<dbReference type="UCSC" id="uc003qid.3">
    <property type="organism name" value="human"/>
</dbReference>
<dbReference type="AGR" id="HGNC:51715"/>
<dbReference type="GeneCards" id="CCDC28A-AS1"/>
<dbReference type="HGNC" id="HGNC:51715">
    <property type="gene designation" value="CCDC28A-AS1"/>
</dbReference>
<dbReference type="neXtProt" id="NX_A0A096LPI5"/>
<dbReference type="eggNOG" id="ENOG502TDYD">
    <property type="taxonomic scope" value="Eukaryota"/>
</dbReference>
<dbReference type="HOGENOM" id="CLU_118864_3_2_1"/>
<dbReference type="InParanoid" id="A0A096LPI5"/>
<dbReference type="PAN-GO" id="A0A096LPI5">
    <property type="GO annotations" value="0 GO annotations based on evolutionary models"/>
</dbReference>
<dbReference type="BioGRID-ORCS" id="100507462">
    <property type="hits" value="19 hits in 204 CRISPR screens"/>
</dbReference>
<dbReference type="Pharos" id="A0A096LPI5">
    <property type="development level" value="Tdark"/>
</dbReference>
<dbReference type="PRO" id="PR:A0A096LPI5"/>
<dbReference type="Proteomes" id="UP000005640">
    <property type="component" value="Unplaced"/>
</dbReference>
<dbReference type="RNAct" id="A0A096LPI5">
    <property type="molecule type" value="protein"/>
</dbReference>
<dbReference type="PANTHER" id="PTHR12138:SF149">
    <property type="match status" value="1"/>
</dbReference>
<dbReference type="PANTHER" id="PTHR12138">
    <property type="entry name" value="PRIMATE-EXPANDED PROTEIN FAMILY"/>
    <property type="match status" value="1"/>
</dbReference>
<feature type="chain" id="PRO_0000435399" description="Putative uncharacterized protein CCDC28A-AS1">
    <location>
        <begin position="1"/>
        <end position="108"/>
    </location>
</feature>
<feature type="sequence conflict" description="In Ref. 1; AK092592." evidence="1" ref="1">
    <original>N</original>
    <variation>S</variation>
    <location>
        <position position="55"/>
    </location>
</feature>
<feature type="sequence conflict" description="In Ref. 1; AK092592." evidence="1" ref="1">
    <original>I</original>
    <variation>V</variation>
    <location>
        <position position="68"/>
    </location>
</feature>
<feature type="sequence conflict" description="In Ref. 1; AK092592." evidence="1" ref="1">
    <original>S</original>
    <variation>G</variation>
    <location>
        <position position="80"/>
    </location>
</feature>
<evidence type="ECO:0000305" key="1"/>
<evidence type="ECO:0000312" key="2">
    <source>
        <dbReference type="HGNC" id="HGNC:51715"/>
    </source>
</evidence>
<organism>
    <name type="scientific">Homo sapiens</name>
    <name type="common">Human</name>
    <dbReference type="NCBI Taxonomy" id="9606"/>
    <lineage>
        <taxon>Eukaryota</taxon>
        <taxon>Metazoa</taxon>
        <taxon>Chordata</taxon>
        <taxon>Craniata</taxon>
        <taxon>Vertebrata</taxon>
        <taxon>Euteleostomi</taxon>
        <taxon>Mammalia</taxon>
        <taxon>Eutheria</taxon>
        <taxon>Euarchontoglires</taxon>
        <taxon>Primates</taxon>
        <taxon>Haplorrhini</taxon>
        <taxon>Catarrhini</taxon>
        <taxon>Hominidae</taxon>
        <taxon>Homo</taxon>
    </lineage>
</organism>
<comment type="caution">
    <text evidence="1">Production of a dubious gene prediction.</text>
</comment>
<accession>A0A096LPI5</accession>
<proteinExistence type="predicted"/>
<gene>
    <name evidence="2" type="primary">CCDC28A-AS1</name>
    <name evidence="2" type="synonym">GVQW2</name>
</gene>
<keyword id="KW-1185">Reference proteome</keyword>